<gene>
    <name type="primary">ERF112</name>
    <name type="ordered locus">At2g33710</name>
    <name type="ORF">T1B8.3</name>
</gene>
<keyword id="KW-0010">Activator</keyword>
<keyword id="KW-0025">Alternative splicing</keyword>
<keyword id="KW-0238">DNA-binding</keyword>
<keyword id="KW-0936">Ethylene signaling pathway</keyword>
<keyword id="KW-0539">Nucleus</keyword>
<keyword id="KW-1185">Reference proteome</keyword>
<keyword id="KW-0804">Transcription</keyword>
<keyword id="KW-0805">Transcription regulation</keyword>
<reference key="1">
    <citation type="journal article" date="1999" name="Nature">
        <title>Sequence and analysis of chromosome 2 of the plant Arabidopsis thaliana.</title>
        <authorList>
            <person name="Lin X."/>
            <person name="Kaul S."/>
            <person name="Rounsley S.D."/>
            <person name="Shea T.P."/>
            <person name="Benito M.-I."/>
            <person name="Town C.D."/>
            <person name="Fujii C.Y."/>
            <person name="Mason T.M."/>
            <person name="Bowman C.L."/>
            <person name="Barnstead M.E."/>
            <person name="Feldblyum T.V."/>
            <person name="Buell C.R."/>
            <person name="Ketchum K.A."/>
            <person name="Lee J.J."/>
            <person name="Ronning C.M."/>
            <person name="Koo H.L."/>
            <person name="Moffat K.S."/>
            <person name="Cronin L.A."/>
            <person name="Shen M."/>
            <person name="Pai G."/>
            <person name="Van Aken S."/>
            <person name="Umayam L."/>
            <person name="Tallon L.J."/>
            <person name="Gill J.E."/>
            <person name="Adams M.D."/>
            <person name="Carrera A.J."/>
            <person name="Creasy T.H."/>
            <person name="Goodman H.M."/>
            <person name="Somerville C.R."/>
            <person name="Copenhaver G.P."/>
            <person name="Preuss D."/>
            <person name="Nierman W.C."/>
            <person name="White O."/>
            <person name="Eisen J.A."/>
            <person name="Salzberg S.L."/>
            <person name="Fraser C.M."/>
            <person name="Venter J.C."/>
        </authorList>
    </citation>
    <scope>NUCLEOTIDE SEQUENCE [LARGE SCALE GENOMIC DNA]</scope>
    <source>
        <strain>cv. Columbia</strain>
    </source>
</reference>
<reference key="2">
    <citation type="journal article" date="2017" name="Plant J.">
        <title>Araport11: a complete reannotation of the Arabidopsis thaliana reference genome.</title>
        <authorList>
            <person name="Cheng C.Y."/>
            <person name="Krishnakumar V."/>
            <person name="Chan A.P."/>
            <person name="Thibaud-Nissen F."/>
            <person name="Schobel S."/>
            <person name="Town C.D."/>
        </authorList>
    </citation>
    <scope>GENOME REANNOTATION</scope>
    <source>
        <strain>cv. Columbia</strain>
    </source>
</reference>
<reference key="3">
    <citation type="journal article" date="2003" name="Science">
        <title>Empirical analysis of transcriptional activity in the Arabidopsis genome.</title>
        <authorList>
            <person name="Yamada K."/>
            <person name="Lim J."/>
            <person name="Dale J.M."/>
            <person name="Chen H."/>
            <person name="Shinn P."/>
            <person name="Palm C.J."/>
            <person name="Southwick A.M."/>
            <person name="Wu H.C."/>
            <person name="Kim C.J."/>
            <person name="Nguyen M."/>
            <person name="Pham P.K."/>
            <person name="Cheuk R.F."/>
            <person name="Karlin-Newmann G."/>
            <person name="Liu S.X."/>
            <person name="Lam B."/>
            <person name="Sakano H."/>
            <person name="Wu T."/>
            <person name="Yu G."/>
            <person name="Miranda M."/>
            <person name="Quach H.L."/>
            <person name="Tripp M."/>
            <person name="Chang C.H."/>
            <person name="Lee J.M."/>
            <person name="Toriumi M.J."/>
            <person name="Chan M.M."/>
            <person name="Tang C.C."/>
            <person name="Onodera C.S."/>
            <person name="Deng J.M."/>
            <person name="Akiyama K."/>
            <person name="Ansari Y."/>
            <person name="Arakawa T."/>
            <person name="Banh J."/>
            <person name="Banno F."/>
            <person name="Bowser L."/>
            <person name="Brooks S.Y."/>
            <person name="Carninci P."/>
            <person name="Chao Q."/>
            <person name="Choy N."/>
            <person name="Enju A."/>
            <person name="Goldsmith A.D."/>
            <person name="Gurjal M."/>
            <person name="Hansen N.F."/>
            <person name="Hayashizaki Y."/>
            <person name="Johnson-Hopson C."/>
            <person name="Hsuan V.W."/>
            <person name="Iida K."/>
            <person name="Karnes M."/>
            <person name="Khan S."/>
            <person name="Koesema E."/>
            <person name="Ishida J."/>
            <person name="Jiang P.X."/>
            <person name="Jones T."/>
            <person name="Kawai J."/>
            <person name="Kamiya A."/>
            <person name="Meyers C."/>
            <person name="Nakajima M."/>
            <person name="Narusaka M."/>
            <person name="Seki M."/>
            <person name="Sakurai T."/>
            <person name="Satou M."/>
            <person name="Tamse R."/>
            <person name="Vaysberg M."/>
            <person name="Wallender E.K."/>
            <person name="Wong C."/>
            <person name="Yamamura Y."/>
            <person name="Yuan S."/>
            <person name="Shinozaki K."/>
            <person name="Davis R.W."/>
            <person name="Theologis A."/>
            <person name="Ecker J.R."/>
        </authorList>
    </citation>
    <scope>NUCLEOTIDE SEQUENCE [LARGE SCALE MRNA]</scope>
    <source>
        <strain>cv. Columbia</strain>
    </source>
</reference>
<reference key="4">
    <citation type="journal article" date="2006" name="Plant Physiol.">
        <title>Genome-wide analysis of the ERF gene family in Arabidopsis and rice.</title>
        <authorList>
            <person name="Nakano T."/>
            <person name="Suzuki K."/>
            <person name="Fujimura T."/>
            <person name="Shinshi H."/>
        </authorList>
    </citation>
    <scope>GENE FAMILY</scope>
    <scope>NOMENCLATURE</scope>
</reference>
<dbReference type="EMBL" id="U78721">
    <property type="protein sequence ID" value="AAC69127.1"/>
    <property type="molecule type" value="Genomic_DNA"/>
</dbReference>
<dbReference type="EMBL" id="CP002685">
    <property type="protein sequence ID" value="AEC08872.1"/>
    <property type="molecule type" value="Genomic_DNA"/>
</dbReference>
<dbReference type="EMBL" id="AY136456">
    <property type="protein sequence ID" value="AAM97121.1"/>
    <property type="molecule type" value="mRNA"/>
</dbReference>
<dbReference type="EMBL" id="BT000236">
    <property type="protein sequence ID" value="AAN15555.1"/>
    <property type="molecule type" value="mRNA"/>
</dbReference>
<dbReference type="PIR" id="F84748">
    <property type="entry name" value="F84748"/>
</dbReference>
<dbReference type="RefSeq" id="NP_180927.1">
    <molecule id="P93007-1"/>
    <property type="nucleotide sequence ID" value="NM_128929.3"/>
</dbReference>
<dbReference type="SMR" id="P93007"/>
<dbReference type="BioGRID" id="3283">
    <property type="interactions" value="70"/>
</dbReference>
<dbReference type="FunCoup" id="P93007">
    <property type="interactions" value="4"/>
</dbReference>
<dbReference type="IntAct" id="P93007">
    <property type="interactions" value="69"/>
</dbReference>
<dbReference type="STRING" id="3702.P93007"/>
<dbReference type="PaxDb" id="3702-AT2G33710.2"/>
<dbReference type="ProteomicsDB" id="224734">
    <molecule id="P93007-1"/>
</dbReference>
<dbReference type="EnsemblPlants" id="AT2G33710.1">
    <molecule id="P93007-1"/>
    <property type="protein sequence ID" value="AT2G33710.1"/>
    <property type="gene ID" value="AT2G33710"/>
</dbReference>
<dbReference type="GeneID" id="817936"/>
<dbReference type="Gramene" id="AT2G33710.1">
    <molecule id="P93007-1"/>
    <property type="protein sequence ID" value="AT2G33710.1"/>
    <property type="gene ID" value="AT2G33710"/>
</dbReference>
<dbReference type="KEGG" id="ath:AT2G33710"/>
<dbReference type="Araport" id="AT2G33710"/>
<dbReference type="TAIR" id="AT2G33710"/>
<dbReference type="HOGENOM" id="CLU_1279245_0_0_1"/>
<dbReference type="InParanoid" id="P93007"/>
<dbReference type="OMA" id="RDCIAVT"/>
<dbReference type="OrthoDB" id="1925932at2759"/>
<dbReference type="PhylomeDB" id="P93007"/>
<dbReference type="PRO" id="PR:P93007"/>
<dbReference type="Proteomes" id="UP000006548">
    <property type="component" value="Chromosome 2"/>
</dbReference>
<dbReference type="ExpressionAtlas" id="P93007">
    <property type="expression patterns" value="baseline and differential"/>
</dbReference>
<dbReference type="GO" id="GO:0005634">
    <property type="term" value="C:nucleus"/>
    <property type="evidence" value="ECO:0007669"/>
    <property type="project" value="UniProtKB-SubCell"/>
</dbReference>
<dbReference type="GO" id="GO:0003677">
    <property type="term" value="F:DNA binding"/>
    <property type="evidence" value="ECO:0007669"/>
    <property type="project" value="UniProtKB-KW"/>
</dbReference>
<dbReference type="GO" id="GO:0003700">
    <property type="term" value="F:DNA-binding transcription factor activity"/>
    <property type="evidence" value="ECO:0007669"/>
    <property type="project" value="InterPro"/>
</dbReference>
<dbReference type="GO" id="GO:0009873">
    <property type="term" value="P:ethylene-activated signaling pathway"/>
    <property type="evidence" value="ECO:0007669"/>
    <property type="project" value="UniProtKB-KW"/>
</dbReference>
<dbReference type="CDD" id="cd00018">
    <property type="entry name" value="AP2"/>
    <property type="match status" value="1"/>
</dbReference>
<dbReference type="FunFam" id="3.30.730.10:FF:000001">
    <property type="entry name" value="Ethylene-responsive transcription factor 2"/>
    <property type="match status" value="1"/>
</dbReference>
<dbReference type="Gene3D" id="3.30.730.10">
    <property type="entry name" value="AP2/ERF domain"/>
    <property type="match status" value="1"/>
</dbReference>
<dbReference type="InterPro" id="IPR001471">
    <property type="entry name" value="AP2/ERF_dom"/>
</dbReference>
<dbReference type="InterPro" id="IPR036955">
    <property type="entry name" value="AP2/ERF_dom_sf"/>
</dbReference>
<dbReference type="InterPro" id="IPR016177">
    <property type="entry name" value="DNA-bd_dom_sf"/>
</dbReference>
<dbReference type="InterPro" id="IPR044808">
    <property type="entry name" value="ERF_plant"/>
</dbReference>
<dbReference type="PANTHER" id="PTHR31190">
    <property type="entry name" value="DNA-BINDING DOMAIN"/>
    <property type="match status" value="1"/>
</dbReference>
<dbReference type="PANTHER" id="PTHR31190:SF167">
    <property type="entry name" value="ETHYLENE-RESPONSIVE TRANSCRIPTION FACTOR ERF112"/>
    <property type="match status" value="1"/>
</dbReference>
<dbReference type="Pfam" id="PF00847">
    <property type="entry name" value="AP2"/>
    <property type="match status" value="1"/>
</dbReference>
<dbReference type="PRINTS" id="PR00367">
    <property type="entry name" value="ETHRSPELEMNT"/>
</dbReference>
<dbReference type="SMART" id="SM00380">
    <property type="entry name" value="AP2"/>
    <property type="match status" value="1"/>
</dbReference>
<dbReference type="SUPFAM" id="SSF54171">
    <property type="entry name" value="DNA-binding domain"/>
    <property type="match status" value="1"/>
</dbReference>
<dbReference type="PROSITE" id="PS51032">
    <property type="entry name" value="AP2_ERF"/>
    <property type="match status" value="1"/>
</dbReference>
<proteinExistence type="evidence at protein level"/>
<evidence type="ECO:0000250" key="1"/>
<evidence type="ECO:0000255" key="2">
    <source>
        <dbReference type="PROSITE-ProRule" id="PRU00366"/>
    </source>
</evidence>
<evidence type="ECO:0000256" key="3">
    <source>
        <dbReference type="SAM" id="MobiDB-lite"/>
    </source>
</evidence>
<evidence type="ECO:0000305" key="4"/>
<organism>
    <name type="scientific">Arabidopsis thaliana</name>
    <name type="common">Mouse-ear cress</name>
    <dbReference type="NCBI Taxonomy" id="3702"/>
    <lineage>
        <taxon>Eukaryota</taxon>
        <taxon>Viridiplantae</taxon>
        <taxon>Streptophyta</taxon>
        <taxon>Embryophyta</taxon>
        <taxon>Tracheophyta</taxon>
        <taxon>Spermatophyta</taxon>
        <taxon>Magnoliopsida</taxon>
        <taxon>eudicotyledons</taxon>
        <taxon>Gunneridae</taxon>
        <taxon>Pentapetalae</taxon>
        <taxon>rosids</taxon>
        <taxon>malvids</taxon>
        <taxon>Brassicales</taxon>
        <taxon>Brassicaceae</taxon>
        <taxon>Camelineae</taxon>
        <taxon>Arabidopsis</taxon>
    </lineage>
</organism>
<comment type="function">
    <text evidence="1">Probably acts as a transcriptional activator. Binds to the GCC-box pathogenesis-related promoter element. May be involved in the regulation of gene expression by stress factors and by components of stress signal transduction pathways (By similarity).</text>
</comment>
<comment type="interaction">
    <interactant intactId="EBI-15191903">
        <id>P93007</id>
    </interactant>
    <interactant intactId="EBI-15192423">
        <id>F4JRB0-2</id>
        <label>HHO5</label>
    </interactant>
    <organismsDiffer>false</organismsDiffer>
    <experiments>3</experiments>
</comment>
<comment type="interaction">
    <interactant intactId="EBI-15191903">
        <id>P93007</id>
    </interactant>
    <interactant intactId="EBI-15191905">
        <id>Q1G3I2</id>
        <label>MIP1A</label>
    </interactant>
    <organismsDiffer>false</organismsDiffer>
    <experiments>4</experiments>
</comment>
<comment type="subcellular location">
    <subcellularLocation>
        <location evidence="4">Nucleus</location>
    </subcellularLocation>
</comment>
<comment type="alternative products">
    <event type="alternative splicing"/>
    <isoform>
        <id>P93007-1</id>
        <name>1</name>
        <sequence type="displayed"/>
    </isoform>
    <text>A number of isoforms are produced. According to EST sequences.</text>
</comment>
<comment type="similarity">
    <text evidence="4">Belongs to the AP2/ERF transcription factor family. ERF subfamily.</text>
</comment>
<feature type="chain" id="PRO_0000290423" description="Ethylene-responsive transcription factor ERF112">
    <location>
        <begin position="1"/>
        <end position="218"/>
    </location>
</feature>
<feature type="DNA-binding region" description="AP2/ERF" evidence="2">
    <location>
        <begin position="69"/>
        <end position="126"/>
    </location>
</feature>
<feature type="region of interest" description="Disordered" evidence="3">
    <location>
        <begin position="1"/>
        <end position="20"/>
    </location>
</feature>
<feature type="region of interest" description="Disordered" evidence="3">
    <location>
        <begin position="41"/>
        <end position="72"/>
    </location>
</feature>
<feature type="region of interest" description="Disordered" evidence="3">
    <location>
        <begin position="174"/>
        <end position="218"/>
    </location>
</feature>
<feature type="compositionally biased region" description="Low complexity" evidence="3">
    <location>
        <begin position="44"/>
        <end position="56"/>
    </location>
</feature>
<feature type="compositionally biased region" description="Low complexity" evidence="3">
    <location>
        <begin position="174"/>
        <end position="194"/>
    </location>
</feature>
<name>EF112_ARATH</name>
<accession>P93007</accession>
<sequence>MHSGKRPLSPESMAGNREEKKELCCCSTLSESDVSDFVSELTGQPIPSSIDDQSSSLTLQEKSNSRQRNYRGVRQRPWGKWAAEIRDPNKAARVWLGTFDTAEEAALAYDKAAFEFRGHKAKLNFPEHIRVNPTQLYPSPATSHDRIIVTPPSPPPPIAPDILLDQYGHFQSRSSDSSANLSMNMLSSSSSSLNHQGLRPNLEDGENVKNISIHKRRK</sequence>
<protein>
    <recommendedName>
        <fullName>Ethylene-responsive transcription factor ERF112</fullName>
    </recommendedName>
</protein>